<protein>
    <recommendedName>
        <fullName evidence="1">Ribonuclease H</fullName>
        <shortName evidence="1">RNase H</shortName>
        <ecNumber evidence="1">3.1.26.4</ecNumber>
    </recommendedName>
</protein>
<evidence type="ECO:0000255" key="1">
    <source>
        <dbReference type="HAMAP-Rule" id="MF_00042"/>
    </source>
</evidence>
<evidence type="ECO:0000255" key="2">
    <source>
        <dbReference type="PROSITE-ProRule" id="PRU00408"/>
    </source>
</evidence>
<evidence type="ECO:0000256" key="3">
    <source>
        <dbReference type="SAM" id="MobiDB-lite"/>
    </source>
</evidence>
<name>RNH_HYPNA</name>
<accession>Q0C3M1</accession>
<keyword id="KW-0963">Cytoplasm</keyword>
<keyword id="KW-0255">Endonuclease</keyword>
<keyword id="KW-0378">Hydrolase</keyword>
<keyword id="KW-0460">Magnesium</keyword>
<keyword id="KW-0479">Metal-binding</keyword>
<keyword id="KW-0540">Nuclease</keyword>
<keyword id="KW-1185">Reference proteome</keyword>
<proteinExistence type="inferred from homology"/>
<feature type="chain" id="PRO_0000332615" description="Ribonuclease H">
    <location>
        <begin position="1"/>
        <end position="150"/>
    </location>
</feature>
<feature type="domain" description="RNase H type-1" evidence="2">
    <location>
        <begin position="3"/>
        <end position="144"/>
    </location>
</feature>
<feature type="region of interest" description="Disordered" evidence="3">
    <location>
        <begin position="129"/>
        <end position="150"/>
    </location>
</feature>
<feature type="binding site" evidence="1">
    <location>
        <position position="12"/>
    </location>
    <ligand>
        <name>Mg(2+)</name>
        <dbReference type="ChEBI" id="CHEBI:18420"/>
        <label>1</label>
    </ligand>
</feature>
<feature type="binding site" evidence="1">
    <location>
        <position position="12"/>
    </location>
    <ligand>
        <name>Mg(2+)</name>
        <dbReference type="ChEBI" id="CHEBI:18420"/>
        <label>2</label>
    </ligand>
</feature>
<feature type="binding site" evidence="1">
    <location>
        <position position="50"/>
    </location>
    <ligand>
        <name>Mg(2+)</name>
        <dbReference type="ChEBI" id="CHEBI:18420"/>
        <label>1</label>
    </ligand>
</feature>
<feature type="binding site" evidence="1">
    <location>
        <position position="72"/>
    </location>
    <ligand>
        <name>Mg(2+)</name>
        <dbReference type="ChEBI" id="CHEBI:18420"/>
        <label>1</label>
    </ligand>
</feature>
<feature type="binding site" evidence="1">
    <location>
        <position position="136"/>
    </location>
    <ligand>
        <name>Mg(2+)</name>
        <dbReference type="ChEBI" id="CHEBI:18420"/>
        <label>2</label>
    </ligand>
</feature>
<sequence length="150" mass="16853">MTDKDMIEIWTDGACSGNPGPGGWGALIRWNGHEKELYGGDPATTNNRMEMTAVIEALNALNRPSKITLNVDSTYVKDGLTKWIKGWKRNGWKTADKKPVKNQELWMAMEEACKRHEITWVWVKGHAGDEGNERADGLARKGTDEVRGRK</sequence>
<gene>
    <name evidence="1" type="primary">rnhA</name>
    <name type="ordered locus">HNE_0945</name>
</gene>
<organism>
    <name type="scientific">Hyphomonas neptunium (strain ATCC 15444)</name>
    <dbReference type="NCBI Taxonomy" id="228405"/>
    <lineage>
        <taxon>Bacteria</taxon>
        <taxon>Pseudomonadati</taxon>
        <taxon>Pseudomonadota</taxon>
        <taxon>Alphaproteobacteria</taxon>
        <taxon>Hyphomonadales</taxon>
        <taxon>Hyphomonadaceae</taxon>
        <taxon>Hyphomonas</taxon>
    </lineage>
</organism>
<dbReference type="EC" id="3.1.26.4" evidence="1"/>
<dbReference type="EMBL" id="CP000158">
    <property type="protein sequence ID" value="ABI78074.1"/>
    <property type="molecule type" value="Genomic_DNA"/>
</dbReference>
<dbReference type="RefSeq" id="WP_011645972.1">
    <property type="nucleotide sequence ID" value="NC_008358.1"/>
</dbReference>
<dbReference type="SMR" id="Q0C3M1"/>
<dbReference type="STRING" id="228405.HNE_0945"/>
<dbReference type="KEGG" id="hne:HNE_0945"/>
<dbReference type="eggNOG" id="COG0328">
    <property type="taxonomic scope" value="Bacteria"/>
</dbReference>
<dbReference type="HOGENOM" id="CLU_030894_6_0_5"/>
<dbReference type="Proteomes" id="UP000001959">
    <property type="component" value="Chromosome"/>
</dbReference>
<dbReference type="GO" id="GO:0005737">
    <property type="term" value="C:cytoplasm"/>
    <property type="evidence" value="ECO:0007669"/>
    <property type="project" value="UniProtKB-SubCell"/>
</dbReference>
<dbReference type="GO" id="GO:0000287">
    <property type="term" value="F:magnesium ion binding"/>
    <property type="evidence" value="ECO:0007669"/>
    <property type="project" value="UniProtKB-UniRule"/>
</dbReference>
<dbReference type="GO" id="GO:0003676">
    <property type="term" value="F:nucleic acid binding"/>
    <property type="evidence" value="ECO:0007669"/>
    <property type="project" value="InterPro"/>
</dbReference>
<dbReference type="GO" id="GO:0004523">
    <property type="term" value="F:RNA-DNA hybrid ribonuclease activity"/>
    <property type="evidence" value="ECO:0007669"/>
    <property type="project" value="UniProtKB-UniRule"/>
</dbReference>
<dbReference type="GO" id="GO:0043137">
    <property type="term" value="P:DNA replication, removal of RNA primer"/>
    <property type="evidence" value="ECO:0007669"/>
    <property type="project" value="TreeGrafter"/>
</dbReference>
<dbReference type="CDD" id="cd09278">
    <property type="entry name" value="RNase_HI_prokaryote_like"/>
    <property type="match status" value="1"/>
</dbReference>
<dbReference type="FunFam" id="3.30.420.10:FF:000089">
    <property type="entry name" value="Ribonuclease H"/>
    <property type="match status" value="1"/>
</dbReference>
<dbReference type="Gene3D" id="3.30.420.10">
    <property type="entry name" value="Ribonuclease H-like superfamily/Ribonuclease H"/>
    <property type="match status" value="1"/>
</dbReference>
<dbReference type="HAMAP" id="MF_00042">
    <property type="entry name" value="RNase_H"/>
    <property type="match status" value="1"/>
</dbReference>
<dbReference type="InterPro" id="IPR050092">
    <property type="entry name" value="RNase_H"/>
</dbReference>
<dbReference type="InterPro" id="IPR012337">
    <property type="entry name" value="RNaseH-like_sf"/>
</dbReference>
<dbReference type="InterPro" id="IPR002156">
    <property type="entry name" value="RNaseH_domain"/>
</dbReference>
<dbReference type="InterPro" id="IPR036397">
    <property type="entry name" value="RNaseH_sf"/>
</dbReference>
<dbReference type="InterPro" id="IPR022892">
    <property type="entry name" value="RNaseHI"/>
</dbReference>
<dbReference type="NCBIfam" id="NF001236">
    <property type="entry name" value="PRK00203.1"/>
    <property type="match status" value="1"/>
</dbReference>
<dbReference type="PANTHER" id="PTHR10642">
    <property type="entry name" value="RIBONUCLEASE H1"/>
    <property type="match status" value="1"/>
</dbReference>
<dbReference type="PANTHER" id="PTHR10642:SF26">
    <property type="entry name" value="RIBONUCLEASE H1"/>
    <property type="match status" value="1"/>
</dbReference>
<dbReference type="Pfam" id="PF00075">
    <property type="entry name" value="RNase_H"/>
    <property type="match status" value="1"/>
</dbReference>
<dbReference type="SUPFAM" id="SSF53098">
    <property type="entry name" value="Ribonuclease H-like"/>
    <property type="match status" value="1"/>
</dbReference>
<dbReference type="PROSITE" id="PS50879">
    <property type="entry name" value="RNASE_H_1"/>
    <property type="match status" value="1"/>
</dbReference>
<comment type="function">
    <text evidence="1">Endonuclease that specifically degrades the RNA of RNA-DNA hybrids.</text>
</comment>
<comment type="catalytic activity">
    <reaction evidence="1">
        <text>Endonucleolytic cleavage to 5'-phosphomonoester.</text>
        <dbReference type="EC" id="3.1.26.4"/>
    </reaction>
</comment>
<comment type="cofactor">
    <cofactor evidence="1">
        <name>Mg(2+)</name>
        <dbReference type="ChEBI" id="CHEBI:18420"/>
    </cofactor>
    <text evidence="1">Binds 1 Mg(2+) ion per subunit. May bind a second metal ion at a regulatory site, or after substrate binding.</text>
</comment>
<comment type="subunit">
    <text evidence="1">Monomer.</text>
</comment>
<comment type="subcellular location">
    <subcellularLocation>
        <location evidence="1">Cytoplasm</location>
    </subcellularLocation>
</comment>
<comment type="similarity">
    <text evidence="1">Belongs to the RNase H family.</text>
</comment>
<reference key="1">
    <citation type="journal article" date="2006" name="J. Bacteriol.">
        <title>Comparative genomic evidence for a close relationship between the dimorphic prosthecate bacteria Hyphomonas neptunium and Caulobacter crescentus.</title>
        <authorList>
            <person name="Badger J.H."/>
            <person name="Hoover T.R."/>
            <person name="Brun Y.V."/>
            <person name="Weiner R.M."/>
            <person name="Laub M.T."/>
            <person name="Alexandre G."/>
            <person name="Mrazek J."/>
            <person name="Ren Q."/>
            <person name="Paulsen I.T."/>
            <person name="Nelson K.E."/>
            <person name="Khouri H.M."/>
            <person name="Radune D."/>
            <person name="Sosa J."/>
            <person name="Dodson R.J."/>
            <person name="Sullivan S.A."/>
            <person name="Rosovitz M.J."/>
            <person name="Madupu R."/>
            <person name="Brinkac L.M."/>
            <person name="Durkin A.S."/>
            <person name="Daugherty S.C."/>
            <person name="Kothari S.P."/>
            <person name="Giglio M.G."/>
            <person name="Zhou L."/>
            <person name="Haft D.H."/>
            <person name="Selengut J.D."/>
            <person name="Davidsen T.M."/>
            <person name="Yang Q."/>
            <person name="Zafar N."/>
            <person name="Ward N.L."/>
        </authorList>
    </citation>
    <scope>NUCLEOTIDE SEQUENCE [LARGE SCALE GENOMIC DNA]</scope>
    <source>
        <strain>ATCC 15444</strain>
    </source>
</reference>